<accession>B8J0K9</accession>
<proteinExistence type="inferred from homology"/>
<reference key="1">
    <citation type="submission" date="2009-01" db="EMBL/GenBank/DDBJ databases">
        <title>Complete sequence of Desulfovibrio desulfuricans subsp. desulfuricans str. ATCC 27774.</title>
        <authorList>
            <consortium name="US DOE Joint Genome Institute"/>
            <person name="Lucas S."/>
            <person name="Copeland A."/>
            <person name="Lapidus A."/>
            <person name="Glavina del Rio T."/>
            <person name="Tice H."/>
            <person name="Bruce D."/>
            <person name="Goodwin L."/>
            <person name="Pitluck S."/>
            <person name="Sims D."/>
            <person name="Lu M."/>
            <person name="Kiss H."/>
            <person name="Meineke L."/>
            <person name="Brettin T."/>
            <person name="Detter J.C."/>
            <person name="Han C."/>
            <person name="Larimer F."/>
            <person name="Land M."/>
            <person name="Hauser L."/>
            <person name="Kyrpides N."/>
            <person name="Ovchinnikova G."/>
            <person name="Hazen T.C."/>
        </authorList>
    </citation>
    <scope>NUCLEOTIDE SEQUENCE [LARGE SCALE GENOMIC DNA]</scope>
    <source>
        <strain>ATCC 27774 / DSM 6949 / MB</strain>
    </source>
</reference>
<organism>
    <name type="scientific">Desulfovibrio desulfuricans (strain ATCC 27774 / DSM 6949 / MB)</name>
    <dbReference type="NCBI Taxonomy" id="525146"/>
    <lineage>
        <taxon>Bacteria</taxon>
        <taxon>Pseudomonadati</taxon>
        <taxon>Thermodesulfobacteriota</taxon>
        <taxon>Desulfovibrionia</taxon>
        <taxon>Desulfovibrionales</taxon>
        <taxon>Desulfovibrionaceae</taxon>
        <taxon>Desulfovibrio</taxon>
    </lineage>
</organism>
<name>RL28_DESDA</name>
<sequence>MSKECIFCGKKPQVGNLVSHSNIKTKRRFNPNLQRVRHQFADGSVRTLTVCTRCLRSGVVTKPLVRKQG</sequence>
<gene>
    <name evidence="1" type="primary">rpmB</name>
    <name type="ordered locus">Ddes_1384</name>
</gene>
<comment type="similarity">
    <text evidence="1">Belongs to the bacterial ribosomal protein bL28 family.</text>
</comment>
<evidence type="ECO:0000255" key="1">
    <source>
        <dbReference type="HAMAP-Rule" id="MF_00373"/>
    </source>
</evidence>
<evidence type="ECO:0000305" key="2"/>
<keyword id="KW-0687">Ribonucleoprotein</keyword>
<keyword id="KW-0689">Ribosomal protein</keyword>
<protein>
    <recommendedName>
        <fullName evidence="1">Large ribosomal subunit protein bL28</fullName>
    </recommendedName>
    <alternativeName>
        <fullName evidence="2">50S ribosomal protein L28</fullName>
    </alternativeName>
</protein>
<feature type="chain" id="PRO_1000195919" description="Large ribosomal subunit protein bL28">
    <location>
        <begin position="1"/>
        <end position="69"/>
    </location>
</feature>
<dbReference type="EMBL" id="CP001358">
    <property type="protein sequence ID" value="ACL49286.1"/>
    <property type="molecule type" value="Genomic_DNA"/>
</dbReference>
<dbReference type="SMR" id="B8J0K9"/>
<dbReference type="STRING" id="525146.Ddes_1384"/>
<dbReference type="KEGG" id="dds:Ddes_1384"/>
<dbReference type="eggNOG" id="COG0227">
    <property type="taxonomic scope" value="Bacteria"/>
</dbReference>
<dbReference type="HOGENOM" id="CLU_064548_7_0_7"/>
<dbReference type="GO" id="GO:1990904">
    <property type="term" value="C:ribonucleoprotein complex"/>
    <property type="evidence" value="ECO:0007669"/>
    <property type="project" value="UniProtKB-KW"/>
</dbReference>
<dbReference type="GO" id="GO:0005840">
    <property type="term" value="C:ribosome"/>
    <property type="evidence" value="ECO:0007669"/>
    <property type="project" value="UniProtKB-KW"/>
</dbReference>
<dbReference type="GO" id="GO:0003735">
    <property type="term" value="F:structural constituent of ribosome"/>
    <property type="evidence" value="ECO:0007669"/>
    <property type="project" value="InterPro"/>
</dbReference>
<dbReference type="GO" id="GO:0006412">
    <property type="term" value="P:translation"/>
    <property type="evidence" value="ECO:0007669"/>
    <property type="project" value="UniProtKB-UniRule"/>
</dbReference>
<dbReference type="Gene3D" id="2.30.170.40">
    <property type="entry name" value="Ribosomal protein L28/L24"/>
    <property type="match status" value="1"/>
</dbReference>
<dbReference type="HAMAP" id="MF_00373">
    <property type="entry name" value="Ribosomal_bL28"/>
    <property type="match status" value="1"/>
</dbReference>
<dbReference type="InterPro" id="IPR050096">
    <property type="entry name" value="Bacterial_rp_bL28"/>
</dbReference>
<dbReference type="InterPro" id="IPR026569">
    <property type="entry name" value="Ribosomal_bL28"/>
</dbReference>
<dbReference type="InterPro" id="IPR034704">
    <property type="entry name" value="Ribosomal_bL28/bL31-like_sf"/>
</dbReference>
<dbReference type="InterPro" id="IPR001383">
    <property type="entry name" value="Ribosomal_bL28_bact-type"/>
</dbReference>
<dbReference type="InterPro" id="IPR037147">
    <property type="entry name" value="Ribosomal_bL28_sf"/>
</dbReference>
<dbReference type="NCBIfam" id="TIGR00009">
    <property type="entry name" value="L28"/>
    <property type="match status" value="1"/>
</dbReference>
<dbReference type="PANTHER" id="PTHR39080">
    <property type="entry name" value="50S RIBOSOMAL PROTEIN L28"/>
    <property type="match status" value="1"/>
</dbReference>
<dbReference type="PANTHER" id="PTHR39080:SF1">
    <property type="entry name" value="LARGE RIBOSOMAL SUBUNIT PROTEIN BL28A"/>
    <property type="match status" value="1"/>
</dbReference>
<dbReference type="Pfam" id="PF00830">
    <property type="entry name" value="Ribosomal_L28"/>
    <property type="match status" value="1"/>
</dbReference>
<dbReference type="SUPFAM" id="SSF143800">
    <property type="entry name" value="L28p-like"/>
    <property type="match status" value="1"/>
</dbReference>